<name>TREF_ECOL5</name>
<sequence>MLNQKIQNPNPDELMIEVDLCYELDPYELKLDEMIEAEPEPEMIEGLPASDALTPADRYLELFEHVQSAKIFPDSKTFPDCAPKMDPLDILIRYRKVRRHRDFDLRKFVENHFWLPEVYSSEYVSDPQNSLKEHIDQLWPVLTREPQDHIPWSSLLALPQSYIVPGGRFSETYYWDSYFTMLGLAESGREDLLKCMADNFAWMIENYGHIPNGNRTYYLSRSQPPVFALMVELFEEDGVRGARRYLDHLKMEYAFWMDGAESLIPNQAYRHVVRMPDGSLLNRYWDDRDTPRDESWLEDVETAKHSGRPPNEVYRDLRAGAASGWDYSSRWLRDTGRLASIRTTQFIPIDLNAFLFKLESAIANISALKGEKETEALFRQKASARRDAVNRYLWDDENGIYRDYDWRREQLALFSAAAIVPLYVGMANHEQADRLANAVRSRLLTPGGILASEYETGEQWDKPNGWAPLQWMAIQGFKMYGDDLLGDEIARNWLKTVNQFYLEQHKLIEKYHIADGVPREGGGGEYPLQDGFGWTNGVVRRLIGLYGEP</sequence>
<gene>
    <name evidence="1" type="primary">treF</name>
    <name type="ordered locus">ECP_3619</name>
</gene>
<organism>
    <name type="scientific">Escherichia coli O6:K15:H31 (strain 536 / UPEC)</name>
    <dbReference type="NCBI Taxonomy" id="362663"/>
    <lineage>
        <taxon>Bacteria</taxon>
        <taxon>Pseudomonadati</taxon>
        <taxon>Pseudomonadota</taxon>
        <taxon>Gammaproteobacteria</taxon>
        <taxon>Enterobacterales</taxon>
        <taxon>Enterobacteriaceae</taxon>
        <taxon>Escherichia</taxon>
    </lineage>
</organism>
<proteinExistence type="inferred from homology"/>
<dbReference type="EC" id="3.2.1.28" evidence="1"/>
<dbReference type="EMBL" id="CP000247">
    <property type="protein sequence ID" value="ABG71595.1"/>
    <property type="molecule type" value="Genomic_DNA"/>
</dbReference>
<dbReference type="RefSeq" id="WP_000934214.1">
    <property type="nucleotide sequence ID" value="NC_008253.1"/>
</dbReference>
<dbReference type="SMR" id="Q0TBT4"/>
<dbReference type="CAZy" id="GH37">
    <property type="family name" value="Glycoside Hydrolase Family 37"/>
</dbReference>
<dbReference type="KEGG" id="ecp:ECP_3619"/>
<dbReference type="HOGENOM" id="CLU_006451_3_1_6"/>
<dbReference type="UniPathway" id="UPA00300">
    <property type="reaction ID" value="UER00535"/>
</dbReference>
<dbReference type="Proteomes" id="UP000009182">
    <property type="component" value="Chromosome"/>
</dbReference>
<dbReference type="GO" id="GO:0005737">
    <property type="term" value="C:cytoplasm"/>
    <property type="evidence" value="ECO:0007669"/>
    <property type="project" value="UniProtKB-SubCell"/>
</dbReference>
<dbReference type="GO" id="GO:0004555">
    <property type="term" value="F:alpha,alpha-trehalase activity"/>
    <property type="evidence" value="ECO:0007669"/>
    <property type="project" value="UniProtKB-UniRule"/>
</dbReference>
<dbReference type="GO" id="GO:0071474">
    <property type="term" value="P:cellular hyperosmotic response"/>
    <property type="evidence" value="ECO:0007669"/>
    <property type="project" value="InterPro"/>
</dbReference>
<dbReference type="GO" id="GO:0005993">
    <property type="term" value="P:trehalose catabolic process"/>
    <property type="evidence" value="ECO:0007669"/>
    <property type="project" value="UniProtKB-UniRule"/>
</dbReference>
<dbReference type="FunFam" id="1.50.10.10:FF:000003">
    <property type="entry name" value="Cytoplasmic trehalase"/>
    <property type="match status" value="1"/>
</dbReference>
<dbReference type="Gene3D" id="1.50.10.10">
    <property type="match status" value="1"/>
</dbReference>
<dbReference type="HAMAP" id="MF_01059">
    <property type="entry name" value="Cyt_trehalase"/>
    <property type="match status" value="1"/>
</dbReference>
<dbReference type="InterPro" id="IPR008928">
    <property type="entry name" value="6-hairpin_glycosidase_sf"/>
</dbReference>
<dbReference type="InterPro" id="IPR012341">
    <property type="entry name" value="6hp_glycosidase-like_sf"/>
</dbReference>
<dbReference type="InterPro" id="IPR023715">
    <property type="entry name" value="Cyt_trehalase"/>
</dbReference>
<dbReference type="InterPro" id="IPR001661">
    <property type="entry name" value="Glyco_hydro_37"/>
</dbReference>
<dbReference type="InterPro" id="IPR018232">
    <property type="entry name" value="Glyco_hydro_37_CS"/>
</dbReference>
<dbReference type="NCBIfam" id="NF009773">
    <property type="entry name" value="PRK13270.1"/>
    <property type="match status" value="1"/>
</dbReference>
<dbReference type="NCBIfam" id="NF009774">
    <property type="entry name" value="PRK13271.1"/>
    <property type="match status" value="1"/>
</dbReference>
<dbReference type="PANTHER" id="PTHR23403:SF8">
    <property type="entry name" value="CYTOPLASMIC TREHALASE"/>
    <property type="match status" value="1"/>
</dbReference>
<dbReference type="PANTHER" id="PTHR23403">
    <property type="entry name" value="TREHALASE"/>
    <property type="match status" value="1"/>
</dbReference>
<dbReference type="Pfam" id="PF01204">
    <property type="entry name" value="Trehalase"/>
    <property type="match status" value="1"/>
</dbReference>
<dbReference type="PRINTS" id="PR00744">
    <property type="entry name" value="GLHYDRLASE37"/>
</dbReference>
<dbReference type="SUPFAM" id="SSF48208">
    <property type="entry name" value="Six-hairpin glycosidases"/>
    <property type="match status" value="1"/>
</dbReference>
<dbReference type="PROSITE" id="PS00927">
    <property type="entry name" value="TREHALASE_1"/>
    <property type="match status" value="1"/>
</dbReference>
<dbReference type="PROSITE" id="PS00928">
    <property type="entry name" value="TREHALASE_2"/>
    <property type="match status" value="1"/>
</dbReference>
<reference key="1">
    <citation type="journal article" date="2006" name="Mol. Microbiol.">
        <title>Role of pathogenicity island-associated integrases in the genome plasticity of uropathogenic Escherichia coli strain 536.</title>
        <authorList>
            <person name="Hochhut B."/>
            <person name="Wilde C."/>
            <person name="Balling G."/>
            <person name="Middendorf B."/>
            <person name="Dobrindt U."/>
            <person name="Brzuszkiewicz E."/>
            <person name="Gottschalk G."/>
            <person name="Carniel E."/>
            <person name="Hacker J."/>
        </authorList>
    </citation>
    <scope>NUCLEOTIDE SEQUENCE [LARGE SCALE GENOMIC DNA]</scope>
    <source>
        <strain>536 / UPEC</strain>
    </source>
</reference>
<protein>
    <recommendedName>
        <fullName evidence="1">Cytoplasmic trehalase</fullName>
        <ecNumber evidence="1">3.2.1.28</ecNumber>
    </recommendedName>
    <alternativeName>
        <fullName evidence="1">Alpha,alpha-trehalase</fullName>
    </alternativeName>
    <alternativeName>
        <fullName evidence="1">Alpha,alpha-trehalose glucohydrolase</fullName>
    </alternativeName>
</protein>
<evidence type="ECO:0000255" key="1">
    <source>
        <dbReference type="HAMAP-Rule" id="MF_01059"/>
    </source>
</evidence>
<comment type="function">
    <text evidence="1">Hydrolyzes trehalose to glucose. Could be involved, in cells returning to low osmolarity conditions, in the utilization of the accumulated cytoplasmic trehalose, which was synthesized in response to high osmolarity.</text>
</comment>
<comment type="catalytic activity">
    <reaction evidence="1">
        <text>alpha,alpha-trehalose + H2O = alpha-D-glucose + beta-D-glucose</text>
        <dbReference type="Rhea" id="RHEA:32675"/>
        <dbReference type="ChEBI" id="CHEBI:15377"/>
        <dbReference type="ChEBI" id="CHEBI:15903"/>
        <dbReference type="ChEBI" id="CHEBI:16551"/>
        <dbReference type="ChEBI" id="CHEBI:17925"/>
        <dbReference type="EC" id="3.2.1.28"/>
    </reaction>
</comment>
<comment type="pathway">
    <text evidence="1">Glycan degradation; trehalose degradation; D-glucose from alpha,alpha-trehalose: step 1/1.</text>
</comment>
<comment type="subunit">
    <text evidence="1">Monomer.</text>
</comment>
<comment type="subcellular location">
    <subcellularLocation>
        <location evidence="1">Cytoplasm</location>
    </subcellularLocation>
</comment>
<comment type="similarity">
    <text evidence="1">Belongs to the glycosyl hydrolase 37 family.</text>
</comment>
<accession>Q0TBT4</accession>
<keyword id="KW-0963">Cytoplasm</keyword>
<keyword id="KW-0326">Glycosidase</keyword>
<keyword id="KW-0378">Hydrolase</keyword>
<feature type="chain" id="PRO_1000064443" description="Cytoplasmic trehalase">
    <location>
        <begin position="1"/>
        <end position="549"/>
    </location>
</feature>
<feature type="active site" description="Proton donor/acceptor" evidence="1">
    <location>
        <position position="326"/>
    </location>
</feature>
<feature type="active site" description="Proton donor/acceptor" evidence="1">
    <location>
        <position position="509"/>
    </location>
</feature>
<feature type="binding site" evidence="1">
    <location>
        <position position="168"/>
    </location>
    <ligand>
        <name>substrate</name>
    </ligand>
</feature>
<feature type="binding site" evidence="1">
    <location>
        <begin position="175"/>
        <end position="176"/>
    </location>
    <ligand>
        <name>substrate</name>
    </ligand>
</feature>
<feature type="binding site" evidence="1">
    <location>
        <position position="212"/>
    </location>
    <ligand>
        <name>substrate</name>
    </ligand>
</feature>
<feature type="binding site" evidence="1">
    <location>
        <begin position="221"/>
        <end position="223"/>
    </location>
    <ligand>
        <name>substrate</name>
    </ligand>
</feature>
<feature type="binding site" evidence="1">
    <location>
        <begin position="292"/>
        <end position="294"/>
    </location>
    <ligand>
        <name>substrate</name>
    </ligand>
</feature>
<feature type="binding site" evidence="1">
    <location>
        <position position="324"/>
    </location>
    <ligand>
        <name>substrate</name>
    </ligand>
</feature>
<feature type="binding site" evidence="1">
    <location>
        <position position="525"/>
    </location>
    <ligand>
        <name>substrate</name>
    </ligand>
</feature>